<reference key="1">
    <citation type="journal article" date="2011" name="PLoS Genet.">
        <title>Genomic analysis of the necrotrophic fungal pathogens Sclerotinia sclerotiorum and Botrytis cinerea.</title>
        <authorList>
            <person name="Amselem J."/>
            <person name="Cuomo C.A."/>
            <person name="van Kan J.A.L."/>
            <person name="Viaud M."/>
            <person name="Benito E.P."/>
            <person name="Couloux A."/>
            <person name="Coutinho P.M."/>
            <person name="de Vries R.P."/>
            <person name="Dyer P.S."/>
            <person name="Fillinger S."/>
            <person name="Fournier E."/>
            <person name="Gout L."/>
            <person name="Hahn M."/>
            <person name="Kohn L."/>
            <person name="Lapalu N."/>
            <person name="Plummer K.M."/>
            <person name="Pradier J.-M."/>
            <person name="Quevillon E."/>
            <person name="Sharon A."/>
            <person name="Simon A."/>
            <person name="ten Have A."/>
            <person name="Tudzynski B."/>
            <person name="Tudzynski P."/>
            <person name="Wincker P."/>
            <person name="Andrew M."/>
            <person name="Anthouard V."/>
            <person name="Beever R.E."/>
            <person name="Beffa R."/>
            <person name="Benoit I."/>
            <person name="Bouzid O."/>
            <person name="Brault B."/>
            <person name="Chen Z."/>
            <person name="Choquer M."/>
            <person name="Collemare J."/>
            <person name="Cotton P."/>
            <person name="Danchin E.G."/>
            <person name="Da Silva C."/>
            <person name="Gautier A."/>
            <person name="Giraud C."/>
            <person name="Giraud T."/>
            <person name="Gonzalez C."/>
            <person name="Grossetete S."/>
            <person name="Gueldener U."/>
            <person name="Henrissat B."/>
            <person name="Howlett B.J."/>
            <person name="Kodira C."/>
            <person name="Kretschmer M."/>
            <person name="Lappartient A."/>
            <person name="Leroch M."/>
            <person name="Levis C."/>
            <person name="Mauceli E."/>
            <person name="Neuveglise C."/>
            <person name="Oeser B."/>
            <person name="Pearson M."/>
            <person name="Poulain J."/>
            <person name="Poussereau N."/>
            <person name="Quesneville H."/>
            <person name="Rascle C."/>
            <person name="Schumacher J."/>
            <person name="Segurens B."/>
            <person name="Sexton A."/>
            <person name="Silva E."/>
            <person name="Sirven C."/>
            <person name="Soanes D.M."/>
            <person name="Talbot N.J."/>
            <person name="Templeton M."/>
            <person name="Yandava C."/>
            <person name="Yarden O."/>
            <person name="Zeng Q."/>
            <person name="Rollins J.A."/>
            <person name="Lebrun M.-H."/>
            <person name="Dickman M."/>
        </authorList>
    </citation>
    <scope>NUCLEOTIDE SEQUENCE [LARGE SCALE GENOMIC DNA]</scope>
    <source>
        <strain>B05.10</strain>
    </source>
</reference>
<reference key="2">
    <citation type="journal article" date="2012" name="Eukaryot. Cell">
        <title>Genome update of Botrytis cinerea strains B05.10 and T4.</title>
        <authorList>
            <person name="Staats M."/>
            <person name="van Kan J.A.L."/>
        </authorList>
    </citation>
    <scope>NUCLEOTIDE SEQUENCE [LARGE SCALE GENOMIC DNA]</scope>
    <scope>GENOME REANNOTATION</scope>
    <source>
        <strain>B05.10</strain>
    </source>
</reference>
<reference key="3">
    <citation type="journal article" date="2017" name="Mol. Plant Pathol.">
        <title>A gapless genome sequence of the fungus Botrytis cinerea.</title>
        <authorList>
            <person name="van Kan J.A.L."/>
            <person name="Stassen J.H.M."/>
            <person name="Mosbach A."/>
            <person name="van der Lee T.A.J."/>
            <person name="Faino L."/>
            <person name="Farmer A.D."/>
            <person name="Papasotiriou D.G."/>
            <person name="Zhou S."/>
            <person name="Seidl M.F."/>
            <person name="Cottam E."/>
            <person name="Edel D."/>
            <person name="Hahn M."/>
            <person name="Schwartz D.C."/>
            <person name="Dietrich R.A."/>
            <person name="Widdison S."/>
            <person name="Scalliet G."/>
        </authorList>
    </citation>
    <scope>NUCLEOTIDE SEQUENCE [LARGE SCALE GENOMIC DNA]</scope>
    <scope>GENOME REANNOTATION</scope>
    <source>
        <strain>B05.10</strain>
    </source>
</reference>
<comment type="function">
    <text evidence="1">ATP-binding RNA helicase involved in 40S ribosomal subunit biogenesis and is required for the normal formation of 18S rRNAs through pre-rRNA processing at A0, A1 and A2 sites. Required for vegetative growth (By similarity).</text>
</comment>
<comment type="catalytic activity">
    <reaction>
        <text>ATP + H2O = ADP + phosphate + H(+)</text>
        <dbReference type="Rhea" id="RHEA:13065"/>
        <dbReference type="ChEBI" id="CHEBI:15377"/>
        <dbReference type="ChEBI" id="CHEBI:15378"/>
        <dbReference type="ChEBI" id="CHEBI:30616"/>
        <dbReference type="ChEBI" id="CHEBI:43474"/>
        <dbReference type="ChEBI" id="CHEBI:456216"/>
        <dbReference type="EC" id="3.6.4.13"/>
    </reaction>
</comment>
<comment type="subcellular location">
    <subcellularLocation>
        <location evidence="1">Nucleus</location>
        <location evidence="1">Nucleolus</location>
    </subcellularLocation>
</comment>
<comment type="domain">
    <text>The Q motif is unique to and characteristic of the DEAD box family of RNA helicases and controls ATP binding and hydrolysis.</text>
</comment>
<comment type="similarity">
    <text evidence="5">Belongs to the DEAD box helicase family. DDX49/DBP8 subfamily.</text>
</comment>
<dbReference type="EC" id="3.6.4.13"/>
<dbReference type="EMBL" id="CP009807">
    <property type="protein sequence ID" value="ATZ48517.1"/>
    <property type="molecule type" value="Genomic_DNA"/>
</dbReference>
<dbReference type="RefSeq" id="XP_001549886.1">
    <property type="nucleotide sequence ID" value="XM_001549836.1"/>
</dbReference>
<dbReference type="SMR" id="A6SFV4"/>
<dbReference type="EnsemblFungi" id="Bcin03g07200.1">
    <property type="protein sequence ID" value="Bcin03p07200.1"/>
    <property type="gene ID" value="Bcin03g07200"/>
</dbReference>
<dbReference type="GeneID" id="5430378"/>
<dbReference type="KEGG" id="bfu:BCIN_03g07200"/>
<dbReference type="VEuPathDB" id="FungiDB:Bcin03g07200"/>
<dbReference type="OMA" id="IMIFTDT"/>
<dbReference type="OrthoDB" id="10261904at2759"/>
<dbReference type="Proteomes" id="UP000001798">
    <property type="component" value="Chromosome bcin03"/>
</dbReference>
<dbReference type="GO" id="GO:0005829">
    <property type="term" value="C:cytosol"/>
    <property type="evidence" value="ECO:0007669"/>
    <property type="project" value="TreeGrafter"/>
</dbReference>
<dbReference type="GO" id="GO:0005730">
    <property type="term" value="C:nucleolus"/>
    <property type="evidence" value="ECO:0007669"/>
    <property type="project" value="UniProtKB-SubCell"/>
</dbReference>
<dbReference type="GO" id="GO:0005524">
    <property type="term" value="F:ATP binding"/>
    <property type="evidence" value="ECO:0007669"/>
    <property type="project" value="UniProtKB-KW"/>
</dbReference>
<dbReference type="GO" id="GO:0016887">
    <property type="term" value="F:ATP hydrolysis activity"/>
    <property type="evidence" value="ECO:0007669"/>
    <property type="project" value="RHEA"/>
</dbReference>
<dbReference type="GO" id="GO:0003723">
    <property type="term" value="F:RNA binding"/>
    <property type="evidence" value="ECO:0007669"/>
    <property type="project" value="UniProtKB-KW"/>
</dbReference>
<dbReference type="GO" id="GO:0003724">
    <property type="term" value="F:RNA helicase activity"/>
    <property type="evidence" value="ECO:0007669"/>
    <property type="project" value="UniProtKB-EC"/>
</dbReference>
<dbReference type="GO" id="GO:0006364">
    <property type="term" value="P:rRNA processing"/>
    <property type="evidence" value="ECO:0007669"/>
    <property type="project" value="UniProtKB-KW"/>
</dbReference>
<dbReference type="CDD" id="cd17955">
    <property type="entry name" value="DEADc_DDX49"/>
    <property type="match status" value="1"/>
</dbReference>
<dbReference type="CDD" id="cd18787">
    <property type="entry name" value="SF2_C_DEAD"/>
    <property type="match status" value="1"/>
</dbReference>
<dbReference type="Gene3D" id="3.40.50.300">
    <property type="entry name" value="P-loop containing nucleotide triphosphate hydrolases"/>
    <property type="match status" value="2"/>
</dbReference>
<dbReference type="InterPro" id="IPR011545">
    <property type="entry name" value="DEAD/DEAH_box_helicase_dom"/>
</dbReference>
<dbReference type="InterPro" id="IPR050079">
    <property type="entry name" value="DEAD_box_RNA_helicase"/>
</dbReference>
<dbReference type="InterPro" id="IPR014001">
    <property type="entry name" value="Helicase_ATP-bd"/>
</dbReference>
<dbReference type="InterPro" id="IPR001650">
    <property type="entry name" value="Helicase_C-like"/>
</dbReference>
<dbReference type="InterPro" id="IPR027417">
    <property type="entry name" value="P-loop_NTPase"/>
</dbReference>
<dbReference type="InterPro" id="IPR000629">
    <property type="entry name" value="RNA-helicase_DEAD-box_CS"/>
</dbReference>
<dbReference type="InterPro" id="IPR014014">
    <property type="entry name" value="RNA_helicase_DEAD_Q_motif"/>
</dbReference>
<dbReference type="PANTHER" id="PTHR47959:SF24">
    <property type="entry name" value="ATP-DEPENDENT RNA HELICASE"/>
    <property type="match status" value="1"/>
</dbReference>
<dbReference type="PANTHER" id="PTHR47959">
    <property type="entry name" value="ATP-DEPENDENT RNA HELICASE RHLE-RELATED"/>
    <property type="match status" value="1"/>
</dbReference>
<dbReference type="Pfam" id="PF00270">
    <property type="entry name" value="DEAD"/>
    <property type="match status" value="1"/>
</dbReference>
<dbReference type="Pfam" id="PF00271">
    <property type="entry name" value="Helicase_C"/>
    <property type="match status" value="1"/>
</dbReference>
<dbReference type="SMART" id="SM00487">
    <property type="entry name" value="DEXDc"/>
    <property type="match status" value="1"/>
</dbReference>
<dbReference type="SMART" id="SM00490">
    <property type="entry name" value="HELICc"/>
    <property type="match status" value="1"/>
</dbReference>
<dbReference type="SUPFAM" id="SSF52540">
    <property type="entry name" value="P-loop containing nucleoside triphosphate hydrolases"/>
    <property type="match status" value="1"/>
</dbReference>
<dbReference type="PROSITE" id="PS00039">
    <property type="entry name" value="DEAD_ATP_HELICASE"/>
    <property type="match status" value="1"/>
</dbReference>
<dbReference type="PROSITE" id="PS51192">
    <property type="entry name" value="HELICASE_ATP_BIND_1"/>
    <property type="match status" value="1"/>
</dbReference>
<dbReference type="PROSITE" id="PS51194">
    <property type="entry name" value="HELICASE_CTER"/>
    <property type="match status" value="1"/>
</dbReference>
<dbReference type="PROSITE" id="PS51195">
    <property type="entry name" value="Q_MOTIF"/>
    <property type="match status" value="1"/>
</dbReference>
<accession>A6SFV4</accession>
<accession>A0A384JDM5</accession>
<gene>
    <name type="primary">dbp8</name>
    <name type="ORF">BC1G_11712</name>
    <name type="ORF">BCIN_03g07200</name>
</gene>
<keyword id="KW-0067">ATP-binding</keyword>
<keyword id="KW-0347">Helicase</keyword>
<keyword id="KW-0378">Hydrolase</keyword>
<keyword id="KW-0547">Nucleotide-binding</keyword>
<keyword id="KW-0539">Nucleus</keyword>
<keyword id="KW-1185">Reference proteome</keyword>
<keyword id="KW-0690">Ribosome biogenesis</keyword>
<keyword id="KW-0694">RNA-binding</keyword>
<keyword id="KW-0698">rRNA processing</keyword>
<protein>
    <recommendedName>
        <fullName>ATP-dependent RNA helicase dbp8</fullName>
        <ecNumber>3.6.4.13</ecNumber>
    </recommendedName>
</protein>
<proteinExistence type="inferred from homology"/>
<sequence>MPSKNSIQGSKTVDRVSIEAPGLSPQSNHNSSSDDEQDEQDDISQSDSDSDSDSDSLDSQASRKRRKTSQEPTQKDIPLIATTSVPSRVKAKSQKNSLDAKNVSNGATLAPTDAQTTFAALNVKPWLVGSLGSMAIKRPTGIQKGCIPEILKGRDCIGGSRTGSGKTVAFAVPILQKWAEDPFGIFALVLTPTRELALQIYEQFKAISSPQSLKAVLITGGSDMRPQATALAQRPHIVIATPGRLADHIRTSGEDTIGALRRVRMVVLDEADRLLASGSVGSMLPDVEECLSILPPPAKRQTLLFTATVTPEVRALKDMPRTPGKLPVFVCEVDTQALAIPPSLNQMHLQVPVTHREHYLHMFLLTEKNLPKSIVIFCNRTATADYLTHLLRLLDHRVTALHSKLPQRQRIDNLGRFRASAARILVATDVAARGLDIPEVGLVINYDIPRDPDDYIHRVGRTARAGRKGEAVSFVGQRDVQLIQAIENRVGRQMEAWAEDGVNLETRVIRESLKLVGEKKREAMLEIEEGREVGGKRKRGMKKLS</sequence>
<evidence type="ECO:0000250" key="1"/>
<evidence type="ECO:0000255" key="2">
    <source>
        <dbReference type="PROSITE-ProRule" id="PRU00541"/>
    </source>
</evidence>
<evidence type="ECO:0000255" key="3">
    <source>
        <dbReference type="PROSITE-ProRule" id="PRU00542"/>
    </source>
</evidence>
<evidence type="ECO:0000256" key="4">
    <source>
        <dbReference type="SAM" id="MobiDB-lite"/>
    </source>
</evidence>
<evidence type="ECO:0000305" key="5"/>
<organism>
    <name type="scientific">Botryotinia fuckeliana (strain B05.10)</name>
    <name type="common">Noble rot fungus</name>
    <name type="synonym">Botrytis cinerea</name>
    <dbReference type="NCBI Taxonomy" id="332648"/>
    <lineage>
        <taxon>Eukaryota</taxon>
        <taxon>Fungi</taxon>
        <taxon>Dikarya</taxon>
        <taxon>Ascomycota</taxon>
        <taxon>Pezizomycotina</taxon>
        <taxon>Leotiomycetes</taxon>
        <taxon>Helotiales</taxon>
        <taxon>Sclerotiniaceae</taxon>
        <taxon>Botrytis</taxon>
    </lineage>
</organism>
<feature type="chain" id="PRO_0000310235" description="ATP-dependent RNA helicase dbp8">
    <location>
        <begin position="1"/>
        <end position="545"/>
    </location>
</feature>
<feature type="domain" description="Helicase ATP-binding" evidence="2">
    <location>
        <begin position="147"/>
        <end position="327"/>
    </location>
</feature>
<feature type="domain" description="Helicase C-terminal" evidence="3">
    <location>
        <begin position="359"/>
        <end position="510"/>
    </location>
</feature>
<feature type="region of interest" description="Disordered" evidence="4">
    <location>
        <begin position="1"/>
        <end position="98"/>
    </location>
</feature>
<feature type="short sequence motif" description="Q motif">
    <location>
        <begin position="116"/>
        <end position="144"/>
    </location>
</feature>
<feature type="short sequence motif" description="DEAD box">
    <location>
        <begin position="269"/>
        <end position="272"/>
    </location>
</feature>
<feature type="compositionally biased region" description="Polar residues" evidence="4">
    <location>
        <begin position="1"/>
        <end position="11"/>
    </location>
</feature>
<feature type="compositionally biased region" description="Acidic residues" evidence="4">
    <location>
        <begin position="33"/>
        <end position="56"/>
    </location>
</feature>
<feature type="binding site" evidence="2">
    <location>
        <begin position="160"/>
        <end position="167"/>
    </location>
    <ligand>
        <name>ATP</name>
        <dbReference type="ChEBI" id="CHEBI:30616"/>
    </ligand>
</feature>
<name>DBP8_BOTFB</name>